<name>ATEA_ASPTE</name>
<dbReference type="EC" id="6.3.2.-" evidence="3"/>
<dbReference type="EMBL" id="OP622863">
    <property type="protein sequence ID" value="WCB22922.1"/>
    <property type="molecule type" value="mRNA"/>
</dbReference>
<dbReference type="GO" id="GO:0016874">
    <property type="term" value="F:ligase activity"/>
    <property type="evidence" value="ECO:0007669"/>
    <property type="project" value="UniProtKB-KW"/>
</dbReference>
<comment type="function">
    <text evidence="3 6">Arginine-containing cyclodipeptide synthase; part of the cluster that mediates the biosynthesis of a highly modified cyclo-arginine-glutamate dipeptide (cRE) (PubMed:36702957). Within the pathway, ateA acts as the scaffold-generating enzyme and is responsible for formation of the cyclo-Arg-Glu diketopiperazine (cRW) from L-arginyl-tRNA(Arg) + L-glutamyl-tRNA(Glu) (PubMed:36702957). Additional enzymes from the cluster then further modify the cyclo-Arg-Glu diketopiperazine (cRW) scaffold (Probable).</text>
</comment>
<comment type="catalytic activity">
    <reaction evidence="3">
        <text>L-glutamyl-tRNA(Glu) + L-arginyl-tRNA(Arg) = cyclo(L-arginyl-L-glutamyl) + tRNA(Glu) + tRNA(Arg) + 2 H(+)</text>
        <dbReference type="Rhea" id="RHEA:80419"/>
        <dbReference type="Rhea" id="RHEA-COMP:9658"/>
        <dbReference type="Rhea" id="RHEA-COMP:9663"/>
        <dbReference type="Rhea" id="RHEA-COMP:9673"/>
        <dbReference type="Rhea" id="RHEA-COMP:9680"/>
        <dbReference type="ChEBI" id="CHEBI:15378"/>
        <dbReference type="ChEBI" id="CHEBI:78442"/>
        <dbReference type="ChEBI" id="CHEBI:78513"/>
        <dbReference type="ChEBI" id="CHEBI:78520"/>
        <dbReference type="ChEBI" id="CHEBI:231490"/>
    </reaction>
    <physiologicalReaction direction="left-to-right" evidence="3">
        <dbReference type="Rhea" id="RHEA:80420"/>
    </physiologicalReaction>
</comment>
<comment type="pathway">
    <text evidence="3">Secondary metabolite biosynthesis.</text>
</comment>
<comment type="domain">
    <text evidence="1">The conserved DDXXE motif is essential for catalytic activity.</text>
</comment>
<comment type="similarity">
    <text evidence="5">Belongs to the arginine-containing cyclodipeptide synthase family.</text>
</comment>
<evidence type="ECO:0000250" key="1">
    <source>
        <dbReference type="UniProtKB" id="P9WEJ7"/>
    </source>
</evidence>
<evidence type="ECO:0000256" key="2">
    <source>
        <dbReference type="SAM" id="MobiDB-lite"/>
    </source>
</evidence>
<evidence type="ECO:0000269" key="3">
    <source>
    </source>
</evidence>
<evidence type="ECO:0000303" key="4">
    <source>
    </source>
</evidence>
<evidence type="ECO:0000305" key="5"/>
<evidence type="ECO:0000305" key="6">
    <source>
    </source>
</evidence>
<gene>
    <name evidence="4" type="primary">ateA</name>
</gene>
<sequence>MDVQYVLADLQTGPESQSSQSSIHFHDMAPFYVVSIERQHGLSGLVSIVPCSTTPTIHYDEKDKKAYQKAWSRGRRFAALFENLLNGGKMATKTSCSLQQTPYLQLRDEALIVGSPLGTPTRTREGISSFHNMEFNFPGAKPVVSSQMLHITCPGLRSEESLFDKNGGALYDSVTVLTGMCLFTRKILDESVADGFLDTRKLLDMQLTLYEVERIAGLSSAIADIAALVLSRYDGKCHKPVNIILDLPTWHYYQSVEDQLQHRGYKPCEVMDWIEAITLRSQQLAGLLKSAVLHELDRRGVSSSQRLYDIQISPGSALVDDAFRETLKYENLPCLDNILEALSGSEDGSWQQFYSLLPERDRPQSIKDLSYLFYIFEVVRPAVLAGIQSGNQQTPTQSADMDSTVSHRQQQPASSRSYTSKQNQMPRPLVISVDDPSERKLYSKAHSFFLRLPKNPIYPADPTLVQVYTTRRVFVDGNRKGERLYRNDPSPVMPELSNGKLYGDGGDAGYSKYARELQQMDFIAKLYGAECAANIQRWSKEVGLC</sequence>
<organism>
    <name type="scientific">Aspergillus terreus</name>
    <dbReference type="NCBI Taxonomy" id="33178"/>
    <lineage>
        <taxon>Eukaryota</taxon>
        <taxon>Fungi</taxon>
        <taxon>Dikarya</taxon>
        <taxon>Ascomycota</taxon>
        <taxon>Pezizomycotina</taxon>
        <taxon>Eurotiomycetes</taxon>
        <taxon>Eurotiomycetidae</taxon>
        <taxon>Eurotiales</taxon>
        <taxon>Aspergillaceae</taxon>
        <taxon>Aspergillus</taxon>
        <taxon>Aspergillus subgen. Circumdati</taxon>
    </lineage>
</organism>
<feature type="chain" id="PRO_0000461004" description="Arginine-containing cyclodipeptide synthase ateA">
    <location>
        <begin position="1"/>
        <end position="545"/>
    </location>
</feature>
<feature type="region of interest" description="Disordered" evidence="2">
    <location>
        <begin position="390"/>
        <end position="433"/>
    </location>
</feature>
<feature type="short sequence motif" description="Conserved DDXXE motif" evidence="1">
    <location>
        <begin position="434"/>
        <end position="438"/>
    </location>
</feature>
<feature type="compositionally biased region" description="Polar residues" evidence="2">
    <location>
        <begin position="390"/>
        <end position="425"/>
    </location>
</feature>
<accession>P9WEJ9</accession>
<proteinExistence type="evidence at protein level"/>
<reference key="1">
    <citation type="journal article" date="2023" name="Nat. Chem. Biol.">
        <title>Genome mining for unknown-unknown natural products.</title>
        <authorList>
            <person name="Yee D.A."/>
            <person name="Niwa K."/>
            <person name="Perlatti B."/>
            <person name="Chen M."/>
            <person name="Li Y."/>
            <person name="Tang Y."/>
        </authorList>
    </citation>
    <scope>NUCLEOTIDE SEQUENCE [MRNA]</scope>
    <scope>FUNCTION</scope>
    <scope>CATALYTIC ACTIVITY</scope>
    <scope>PATHWAY</scope>
</reference>
<protein>
    <recommendedName>
        <fullName evidence="4">Arginine-containing cyclodipeptide synthase ateA</fullName>
        <shortName evidence="4">RCDPS ateA</shortName>
        <ecNumber evidence="3">6.3.2.-</ecNumber>
    </recommendedName>
</protein>
<keyword id="KW-0436">Ligase</keyword>